<organism>
    <name type="scientific">Glycine max</name>
    <name type="common">Soybean</name>
    <name type="synonym">Glycine hispida</name>
    <dbReference type="NCBI Taxonomy" id="3847"/>
    <lineage>
        <taxon>Eukaryota</taxon>
        <taxon>Viridiplantae</taxon>
        <taxon>Streptophyta</taxon>
        <taxon>Embryophyta</taxon>
        <taxon>Tracheophyta</taxon>
        <taxon>Spermatophyta</taxon>
        <taxon>Magnoliopsida</taxon>
        <taxon>eudicotyledons</taxon>
        <taxon>Gunneridae</taxon>
        <taxon>Pentapetalae</taxon>
        <taxon>rosids</taxon>
        <taxon>fabids</taxon>
        <taxon>Fabales</taxon>
        <taxon>Fabaceae</taxon>
        <taxon>Papilionoideae</taxon>
        <taxon>50 kb inversion clade</taxon>
        <taxon>NPAAA clade</taxon>
        <taxon>indigoferoid/millettioid clade</taxon>
        <taxon>Phaseoleae</taxon>
        <taxon>Glycine</taxon>
        <taxon>Glycine subgen. Soja</taxon>
    </lineage>
</organism>
<proteinExistence type="inferred from homology"/>
<reference key="1">
    <citation type="journal article" date="2005" name="Plant Mol. Biol.">
        <title>Complete chloroplast genome sequence of Glycine max and comparative analyses with other legume genomes.</title>
        <authorList>
            <person name="Saski C."/>
            <person name="Lee S.-B."/>
            <person name="Daniell H."/>
            <person name="Wood T.C."/>
            <person name="Tomkins J."/>
            <person name="Kim H.-G."/>
            <person name="Jansen R.K."/>
        </authorList>
    </citation>
    <scope>NUCLEOTIDE SEQUENCE [LARGE SCALE GENOMIC DNA]</scope>
    <source>
        <strain>cv. PI 437654</strain>
    </source>
</reference>
<evidence type="ECO:0000255" key="1">
    <source>
        <dbReference type="HAMAP-Rule" id="MF_01394"/>
    </source>
</evidence>
<name>NU3C_SOYBN</name>
<dbReference type="EC" id="7.1.1.-" evidence="1"/>
<dbReference type="EMBL" id="DQ317523">
    <property type="protein sequence ID" value="ABC25110.1"/>
    <property type="molecule type" value="Genomic_DNA"/>
</dbReference>
<dbReference type="RefSeq" id="YP_538750.1">
    <property type="nucleotide sequence ID" value="NC_007942.1"/>
</dbReference>
<dbReference type="SMR" id="Q2PMU8"/>
<dbReference type="FunCoup" id="Q2PMU8">
    <property type="interactions" value="73"/>
</dbReference>
<dbReference type="STRING" id="3847.Q2PMU8"/>
<dbReference type="PaxDb" id="3847-GLYMA13G04690.2"/>
<dbReference type="EnsemblPlants" id="KRH18574">
    <property type="protein sequence ID" value="KRH18574"/>
    <property type="gene ID" value="GLYMA_13G068600"/>
</dbReference>
<dbReference type="GeneID" id="3989276"/>
<dbReference type="Gramene" id="KRH18574">
    <property type="protein sequence ID" value="KRH18574"/>
    <property type="gene ID" value="GLYMA_13G068600"/>
</dbReference>
<dbReference type="KEGG" id="gmx:3989276"/>
<dbReference type="eggNOG" id="KOG4662">
    <property type="taxonomic scope" value="Eukaryota"/>
</dbReference>
<dbReference type="InParanoid" id="Q2PMU8"/>
<dbReference type="OMA" id="YVYAFLY"/>
<dbReference type="OrthoDB" id="154075at2759"/>
<dbReference type="Proteomes" id="UP000008827">
    <property type="component" value="Chloroplast"/>
</dbReference>
<dbReference type="GO" id="GO:0009535">
    <property type="term" value="C:chloroplast thylakoid membrane"/>
    <property type="evidence" value="ECO:0007669"/>
    <property type="project" value="UniProtKB-SubCell"/>
</dbReference>
<dbReference type="GO" id="GO:0030964">
    <property type="term" value="C:NADH dehydrogenase complex"/>
    <property type="evidence" value="ECO:0000318"/>
    <property type="project" value="GO_Central"/>
</dbReference>
<dbReference type="GO" id="GO:0008137">
    <property type="term" value="F:NADH dehydrogenase (ubiquinone) activity"/>
    <property type="evidence" value="ECO:0000318"/>
    <property type="project" value="GO_Central"/>
</dbReference>
<dbReference type="GO" id="GO:0048038">
    <property type="term" value="F:quinone binding"/>
    <property type="evidence" value="ECO:0007669"/>
    <property type="project" value="UniProtKB-KW"/>
</dbReference>
<dbReference type="GO" id="GO:0019684">
    <property type="term" value="P:photosynthesis, light reaction"/>
    <property type="evidence" value="ECO:0007669"/>
    <property type="project" value="UniProtKB-UniRule"/>
</dbReference>
<dbReference type="FunFam" id="1.20.58.1610:FF:000001">
    <property type="entry name" value="NAD(P)H-quinone oxidoreductase subunit 3, chloroplastic"/>
    <property type="match status" value="1"/>
</dbReference>
<dbReference type="Gene3D" id="1.20.58.1610">
    <property type="entry name" value="NADH:ubiquinone/plastoquinone oxidoreductase, chain 3"/>
    <property type="match status" value="1"/>
</dbReference>
<dbReference type="HAMAP" id="MF_01394">
    <property type="entry name" value="NDH1_NuoA"/>
    <property type="match status" value="1"/>
</dbReference>
<dbReference type="InterPro" id="IPR023043">
    <property type="entry name" value="NAD(P)H_OxRDtase_bac/plastid"/>
</dbReference>
<dbReference type="InterPro" id="IPR000440">
    <property type="entry name" value="NADH_UbQ/plastoQ_OxRdtase_su3"/>
</dbReference>
<dbReference type="InterPro" id="IPR038430">
    <property type="entry name" value="NDAH_ubi_oxred_su3_sf"/>
</dbReference>
<dbReference type="PANTHER" id="PTHR11058">
    <property type="entry name" value="NADH-UBIQUINONE OXIDOREDUCTASE CHAIN 3"/>
    <property type="match status" value="1"/>
</dbReference>
<dbReference type="PANTHER" id="PTHR11058:SF9">
    <property type="entry name" value="NADH-UBIQUINONE OXIDOREDUCTASE CHAIN 3"/>
    <property type="match status" value="1"/>
</dbReference>
<dbReference type="Pfam" id="PF00507">
    <property type="entry name" value="Oxidored_q4"/>
    <property type="match status" value="1"/>
</dbReference>
<accession>Q2PMU8</accession>
<geneLocation type="chloroplast"/>
<protein>
    <recommendedName>
        <fullName evidence="1">NAD(P)H-quinone oxidoreductase subunit 3, chloroplastic</fullName>
        <ecNumber evidence="1">7.1.1.-</ecNumber>
    </recommendedName>
    <alternativeName>
        <fullName evidence="1">NAD(P)H dehydrogenase subunit 3</fullName>
    </alternativeName>
    <alternativeName>
        <fullName evidence="1">NADH-plastoquinone oxidoreductase subunit 3</fullName>
    </alternativeName>
</protein>
<feature type="chain" id="PRO_0000277447" description="NAD(P)H-quinone oxidoreductase subunit 3, chloroplastic">
    <location>
        <begin position="1"/>
        <end position="120"/>
    </location>
</feature>
<feature type="transmembrane region" description="Helical" evidence="1">
    <location>
        <begin position="9"/>
        <end position="29"/>
    </location>
</feature>
<feature type="transmembrane region" description="Helical" evidence="1">
    <location>
        <begin position="64"/>
        <end position="84"/>
    </location>
</feature>
<feature type="transmembrane region" description="Helical" evidence="1">
    <location>
        <begin position="88"/>
        <end position="108"/>
    </location>
</feature>
<keyword id="KW-0150">Chloroplast</keyword>
<keyword id="KW-0472">Membrane</keyword>
<keyword id="KW-0520">NAD</keyword>
<keyword id="KW-0521">NADP</keyword>
<keyword id="KW-0934">Plastid</keyword>
<keyword id="KW-0618">Plastoquinone</keyword>
<keyword id="KW-0874">Quinone</keyword>
<keyword id="KW-1185">Reference proteome</keyword>
<keyword id="KW-0793">Thylakoid</keyword>
<keyword id="KW-1278">Translocase</keyword>
<keyword id="KW-0812">Transmembrane</keyword>
<keyword id="KW-1133">Transmembrane helix</keyword>
<keyword id="KW-0813">Transport</keyword>
<gene>
    <name evidence="1" type="primary">ndhC</name>
</gene>
<comment type="function">
    <text evidence="1">NDH shuttles electrons from NAD(P)H:plastoquinone, via FMN and iron-sulfur (Fe-S) centers, to quinones in the photosynthetic chain and possibly in a chloroplast respiratory chain. The immediate electron acceptor for the enzyme in this species is believed to be plastoquinone. Couples the redox reaction to proton translocation, and thus conserves the redox energy in a proton gradient.</text>
</comment>
<comment type="catalytic activity">
    <reaction evidence="1">
        <text>a plastoquinone + NADH + (n+1) H(+)(in) = a plastoquinol + NAD(+) + n H(+)(out)</text>
        <dbReference type="Rhea" id="RHEA:42608"/>
        <dbReference type="Rhea" id="RHEA-COMP:9561"/>
        <dbReference type="Rhea" id="RHEA-COMP:9562"/>
        <dbReference type="ChEBI" id="CHEBI:15378"/>
        <dbReference type="ChEBI" id="CHEBI:17757"/>
        <dbReference type="ChEBI" id="CHEBI:57540"/>
        <dbReference type="ChEBI" id="CHEBI:57945"/>
        <dbReference type="ChEBI" id="CHEBI:62192"/>
    </reaction>
</comment>
<comment type="catalytic activity">
    <reaction evidence="1">
        <text>a plastoquinone + NADPH + (n+1) H(+)(in) = a plastoquinol + NADP(+) + n H(+)(out)</text>
        <dbReference type="Rhea" id="RHEA:42612"/>
        <dbReference type="Rhea" id="RHEA-COMP:9561"/>
        <dbReference type="Rhea" id="RHEA-COMP:9562"/>
        <dbReference type="ChEBI" id="CHEBI:15378"/>
        <dbReference type="ChEBI" id="CHEBI:17757"/>
        <dbReference type="ChEBI" id="CHEBI:57783"/>
        <dbReference type="ChEBI" id="CHEBI:58349"/>
        <dbReference type="ChEBI" id="CHEBI:62192"/>
    </reaction>
</comment>
<comment type="subunit">
    <text evidence="1">NDH is composed of at least 16 different subunits, 5 of which are encoded in the nucleus.</text>
</comment>
<comment type="subcellular location">
    <subcellularLocation>
        <location evidence="1">Plastid</location>
        <location evidence="1">Chloroplast thylakoid membrane</location>
        <topology evidence="1">Multi-pass membrane protein</topology>
    </subcellularLocation>
</comment>
<comment type="similarity">
    <text evidence="1">Belongs to the complex I subunit 3 family.</text>
</comment>
<sequence>MFLLYEYDIFWAFLIISSFIPILAFLISGILAPISKGPEKLSSYESGIEPIGDAWLQFRIRYYMFALIFVVFDVETVFLYPWAMSFDVLGVSVFIEAFIFVLILIVGSVYAWRKGALEWS</sequence>